<accession>Q72LF4</accession>
<sequence length="65" mass="7310">MRVVLRLPERKEVEVKGNRPLREVLEELGLNPETVVAVRGEELLTLEDEVREEDTLEVLSAISGG</sequence>
<keyword id="KW-0002">3D-structure</keyword>
<keyword id="KW-1017">Isopeptide bond</keyword>
<keyword id="KW-0547">Nucleotide-binding</keyword>
<keyword id="KW-0597">Phosphoprotein</keyword>
<keyword id="KW-0882">Thioester bond</keyword>
<keyword id="KW-0819">tRNA processing</keyword>
<keyword id="KW-0833">Ubl conjugation pathway</keyword>
<feature type="chain" id="PRO_0000442738" description="Sulfur carrier protein TtuB">
    <location>
        <begin position="1"/>
        <end position="65"/>
    </location>
</feature>
<feature type="modified residue" description="1-thioglycine; alternate" evidence="2 9">
    <location>
        <position position="65"/>
    </location>
</feature>
<feature type="modified residue" description="Glycyl adenylate; alternate" evidence="2">
    <location>
        <position position="65"/>
    </location>
</feature>
<feature type="cross-link" description="Glycyl cysteine thioester (Gly-Cys) (interchain with C-192 in TtuC); alternate" evidence="2">
    <location>
        <position position="65"/>
    </location>
</feature>
<feature type="cross-link" description="Glycyl lysine isopeptide (Gly-Lys) (interchain with K-? in acceptor proteins); alternate" evidence="3">
    <location>
        <position position="65"/>
    </location>
</feature>
<feature type="mutagenesis site" description="Loss of formation of TtuB conjugates." evidence="3">
    <location>
        <position position="65"/>
    </location>
</feature>
<feature type="strand" evidence="12">
    <location>
        <begin position="2"/>
        <end position="9"/>
    </location>
</feature>
<feature type="strand" evidence="12">
    <location>
        <begin position="11"/>
        <end position="14"/>
    </location>
</feature>
<feature type="strand" evidence="12">
    <location>
        <begin position="18"/>
        <end position="20"/>
    </location>
</feature>
<feature type="helix" evidence="12">
    <location>
        <begin position="21"/>
        <end position="27"/>
    </location>
</feature>
<feature type="helix" evidence="12">
    <location>
        <begin position="32"/>
        <end position="34"/>
    </location>
</feature>
<feature type="strand" evidence="12">
    <location>
        <begin position="35"/>
        <end position="39"/>
    </location>
</feature>
<feature type="strand" evidence="12">
    <location>
        <begin position="48"/>
        <end position="50"/>
    </location>
</feature>
<feature type="strand" evidence="12">
    <location>
        <begin position="55"/>
        <end position="60"/>
    </location>
</feature>
<name>TTUB_THET2</name>
<reference key="1">
    <citation type="journal article" date="2004" name="Nat. Biotechnol.">
        <title>The genome sequence of the extreme thermophile Thermus thermophilus.</title>
        <authorList>
            <person name="Henne A."/>
            <person name="Brueggemann H."/>
            <person name="Raasch C."/>
            <person name="Wiezer A."/>
            <person name="Hartsch T."/>
            <person name="Liesegang H."/>
            <person name="Johann A."/>
            <person name="Lienard T."/>
            <person name="Gohl O."/>
            <person name="Martinez-Arias R."/>
            <person name="Jacobi C."/>
            <person name="Starkuviene V."/>
            <person name="Schlenczeck S."/>
            <person name="Dencker S."/>
            <person name="Huber R."/>
            <person name="Klenk H.-P."/>
            <person name="Kramer W."/>
            <person name="Merkl R."/>
            <person name="Gottschalk G."/>
            <person name="Fritz H.-J."/>
        </authorList>
    </citation>
    <scope>NUCLEOTIDE SEQUENCE [LARGE SCALE GENOMIC DNA]</scope>
    <source>
        <strain>ATCC BAA-163 / DSM 7039 / HB27</strain>
    </source>
</reference>
<reference key="2">
    <citation type="journal article" date="2006" name="J. Biol. Chem.">
        <title>Identification of two tRNA thiolation genes required for cell growth at extremely high temperatures.</title>
        <authorList>
            <person name="Shigi N."/>
            <person name="Sakaguchi Y."/>
            <person name="Suzuki T."/>
            <person name="Watanabe K."/>
        </authorList>
    </citation>
    <scope>IDENTIFICATION BY MASS SPECTROMETRY</scope>
    <scope>FUNCTION</scope>
    <scope>TRNA-BINDING</scope>
    <scope>DISRUPTION PHENOTYPE</scope>
    <scope>PATHWAY</scope>
    <scope>SUBUNIT</scope>
    <source>
        <strain>ATCC BAA-163 / DSM 7039 / HB27</strain>
    </source>
</reference>
<reference key="3">
    <citation type="journal article" date="2008" name="EMBO J.">
        <title>Common thiolation mechanism in the biosynthesis of tRNA thiouridine and sulphur-containing cofactors.</title>
        <authorList>
            <person name="Shigi N."/>
            <person name="Sakaguchi Y."/>
            <person name="Asai S."/>
            <person name="Suzuki T."/>
            <person name="Watanabe K."/>
        </authorList>
    </citation>
    <scope>FUNCTION</scope>
    <scope>THIOCARBOXYLATION AT GLY-65</scope>
    <scope>AMPYLATION AT GLY-65</scope>
    <scope>CROSS-LINKING TO ADENYLYLTRANSFERASE TTUC</scope>
    <scope>3D-STRUCTURE MODELING</scope>
    <source>
        <strain>ATCC BAA-163 / DSM 7039 / HB27</strain>
    </source>
</reference>
<reference key="4">
    <citation type="journal article" date="2012" name="J. Biol. Chem.">
        <title>Posttranslational modification of cellular proteins by a ubiquitin-like protein in bacteria.</title>
        <authorList>
            <person name="Shigi N."/>
        </authorList>
    </citation>
    <scope>FUNCTION AS A PROTEIN MODIFIER</scope>
    <scope>MUTAGENESIS OF GLY-65</scope>
    <source>
        <strain>ATCC BAA-163 / DSM 7039 / HB27</strain>
    </source>
</reference>
<reference evidence="11" key="5">
    <citation type="journal article" date="2017" name="Proc. Natl. Acad. Sci. U.S.A.">
        <title>Biochemical and structural characterization of oxygen-sensitive 2-thiouridine synthesis catalyzed by an iron-sulfur protein TtuA.</title>
        <authorList>
            <person name="Chen M."/>
            <person name="Asai S."/>
            <person name="Narai S."/>
            <person name="Nambu S."/>
            <person name="Omura N."/>
            <person name="Sakaguchi Y."/>
            <person name="Suzuki T."/>
            <person name="Ikeda-Saito M."/>
            <person name="Watanabe K."/>
            <person name="Yao M."/>
            <person name="Shigi N."/>
            <person name="Tanaka Y."/>
        </authorList>
    </citation>
    <scope>X-RAY CRYSTALLOGRAPHY (2.50 ANGSTROMS) OF MUTANT CYS-65 IN COMPLEX WITH TTUA PROTEIN</scope>
    <scope>FUNCTION</scope>
    <scope>SUBUNIT</scope>
    <source>
        <strain>ATCC BAA-163 / DSM 7039 / HB27</strain>
    </source>
</reference>
<gene>
    <name evidence="5" type="primary">ttuB</name>
    <name evidence="10" type="ordered locus">TT_C0105</name>
</gene>
<dbReference type="EMBL" id="AE017221">
    <property type="protein sequence ID" value="AAS80453.1"/>
    <property type="molecule type" value="Genomic_DNA"/>
</dbReference>
<dbReference type="RefSeq" id="WP_011172562.1">
    <property type="nucleotide sequence ID" value="NC_005835.1"/>
</dbReference>
<dbReference type="PDB" id="5GHA">
    <property type="method" value="X-ray"/>
    <property type="resolution" value="2.50 A"/>
    <property type="chains" value="E/F/G/H=1-64"/>
</dbReference>
<dbReference type="PDB" id="5ZTB">
    <property type="method" value="X-ray"/>
    <property type="resolution" value="2.20 A"/>
    <property type="chains" value="D/E/F=2-65"/>
</dbReference>
<dbReference type="PDBsum" id="5GHA"/>
<dbReference type="PDBsum" id="5ZTB"/>
<dbReference type="SMR" id="Q72LF4"/>
<dbReference type="GeneID" id="3169172"/>
<dbReference type="KEGG" id="tth:TT_C0105"/>
<dbReference type="eggNOG" id="COG2104">
    <property type="taxonomic scope" value="Bacteria"/>
</dbReference>
<dbReference type="HOGENOM" id="CLU_114601_9_5_0"/>
<dbReference type="OrthoDB" id="9814018at2"/>
<dbReference type="BioCyc" id="MetaCyc:MONOMER-20126"/>
<dbReference type="Proteomes" id="UP000000592">
    <property type="component" value="Chromosome"/>
</dbReference>
<dbReference type="GO" id="GO:0000166">
    <property type="term" value="F:nucleotide binding"/>
    <property type="evidence" value="ECO:0007669"/>
    <property type="project" value="UniProtKB-KW"/>
</dbReference>
<dbReference type="GO" id="GO:0008033">
    <property type="term" value="P:tRNA processing"/>
    <property type="evidence" value="ECO:0007669"/>
    <property type="project" value="UniProtKB-KW"/>
</dbReference>
<dbReference type="Gene3D" id="3.10.20.30">
    <property type="match status" value="1"/>
</dbReference>
<dbReference type="InterPro" id="IPR012675">
    <property type="entry name" value="Beta-grasp_dom_sf"/>
</dbReference>
<dbReference type="InterPro" id="IPR016155">
    <property type="entry name" value="Mopterin_synth/thiamin_S_b"/>
</dbReference>
<dbReference type="InterPro" id="IPR003749">
    <property type="entry name" value="ThiS/MoaD-like"/>
</dbReference>
<dbReference type="Pfam" id="PF02597">
    <property type="entry name" value="ThiS"/>
    <property type="match status" value="1"/>
</dbReference>
<dbReference type="SUPFAM" id="SSF54285">
    <property type="entry name" value="MoaD/ThiS"/>
    <property type="match status" value="1"/>
</dbReference>
<organism>
    <name type="scientific">Thermus thermophilus (strain ATCC BAA-163 / DSM 7039 / HB27)</name>
    <dbReference type="NCBI Taxonomy" id="262724"/>
    <lineage>
        <taxon>Bacteria</taxon>
        <taxon>Thermotogati</taxon>
        <taxon>Deinococcota</taxon>
        <taxon>Deinococci</taxon>
        <taxon>Thermales</taxon>
        <taxon>Thermaceae</taxon>
        <taxon>Thermus</taxon>
    </lineage>
</organism>
<proteinExistence type="evidence at protein level"/>
<evidence type="ECO:0000269" key="1">
    <source>
    </source>
</evidence>
<evidence type="ECO:0000269" key="2">
    <source>
    </source>
</evidence>
<evidence type="ECO:0000269" key="3">
    <source>
    </source>
</evidence>
<evidence type="ECO:0000269" key="4">
    <source>
    </source>
</evidence>
<evidence type="ECO:0000303" key="5">
    <source>
    </source>
</evidence>
<evidence type="ECO:0000303" key="6">
    <source>
    </source>
</evidence>
<evidence type="ECO:0000303" key="7">
    <source>
    </source>
</evidence>
<evidence type="ECO:0000305" key="8"/>
<evidence type="ECO:0000305" key="9">
    <source>
    </source>
</evidence>
<evidence type="ECO:0000312" key="10">
    <source>
        <dbReference type="EMBL" id="AAS80453.1"/>
    </source>
</evidence>
<evidence type="ECO:0007744" key="11">
    <source>
        <dbReference type="PDB" id="5GHA"/>
    </source>
</evidence>
<evidence type="ECO:0007829" key="12">
    <source>
        <dbReference type="PDB" id="5ZTB"/>
    </source>
</evidence>
<comment type="function">
    <text evidence="1 2 3 4">Required for the 2-thiolation of 5-methyluridine residue at position 54 in the T loop of tRNAs, leading to 5-methyl-2-thiouridine (m(5)s(2)U or s(2)T) (PubMed:16547008, PubMed:28439027). This modification allows thermal stabilization of tRNAs in thermophilic microorganisms, and is essential for cell growth at high temperatures (PubMed:16547008). Thiocarboxylated TtuB functions as the sulfur donor in the sulfurtransferase reaction catalyzed by TtuA (PubMed:19037260, PubMed:28439027). TtuB also functions as a protein modifier covalently attached to lysine residues of the target proteins TtuA and TtuC (PubMed:22467871). TtuB conjugation might play a regulatory role to ensure appropriate sulfur transfer in cells (PubMed:22467871).</text>
</comment>
<comment type="pathway">
    <text evidence="1">tRNA modification.</text>
</comment>
<comment type="subunit">
    <text evidence="1 4">Is able to form a heterocomplex with TtuA.</text>
</comment>
<comment type="PTM">
    <text evidence="2">The C-terminal glycine residue of TtuB is first activated by TtuC as an acyl-adenylate (TtuB-COAMP), and then converted to the thiocarboxylate form (TtuB-COSH) by the cysteine desulfurases IscS or SufS.</text>
</comment>
<comment type="disruption phenotype">
    <text evidence="1">Disruption of this gene completely abolishes the presence of m(5)s(2)U in tRNAs, although its precursor, 5-methyluridine (ribothymidine) is present; other nucleoside modifications remain unchanged. These deletion mutants exhibit a temperature-sensitive phenotype, they are unable to grow above 80 degrees Celsius.</text>
</comment>
<comment type="similarity">
    <text evidence="8">Belongs to the TtuB family.</text>
</comment>
<protein>
    <recommendedName>
        <fullName evidence="5 7">Sulfur carrier protein TtuB</fullName>
    </recommendedName>
    <alternativeName>
        <fullName evidence="7">2-thiouridine synthesis sulfur carrier protein TtuB</fullName>
    </alternativeName>
    <alternativeName>
        <fullName evidence="7">Ubiquitin-like S-donor protein TtuB</fullName>
    </alternativeName>
    <alternativeName>
        <fullName evidence="6">Ubiquitin-like protein modifier TtuB</fullName>
    </alternativeName>
    <alternativeName>
        <fullName evidence="5">tRNA two-thiouridine-synthesizing protein B</fullName>
    </alternativeName>
</protein>